<gene>
    <name type="primary">punA</name>
    <name type="synonym">deoD</name>
    <name type="ordered locus">ML0707</name>
    <name type="ORF">L308_F2_56</name>
</gene>
<feature type="chain" id="PRO_0000184543" description="Purine nucleoside phosphorylase">
    <location>
        <begin position="1"/>
        <end position="268"/>
    </location>
</feature>
<feature type="binding site" evidence="3">
    <location>
        <position position="36"/>
    </location>
    <ligand>
        <name>phosphate</name>
        <dbReference type="ChEBI" id="CHEBI:43474"/>
    </ligand>
</feature>
<feature type="binding site" evidence="1">
    <location>
        <position position="68"/>
    </location>
    <ligand>
        <name>phosphate</name>
        <dbReference type="ChEBI" id="CHEBI:43474"/>
    </ligand>
</feature>
<feature type="binding site" evidence="1">
    <location>
        <begin position="88"/>
        <end position="90"/>
    </location>
    <ligand>
        <name>phosphate</name>
        <dbReference type="ChEBI" id="CHEBI:43474"/>
    </ligand>
</feature>
<feature type="binding site" evidence="1">
    <location>
        <position position="120"/>
    </location>
    <ligand>
        <name>phosphate</name>
        <dbReference type="ChEBI" id="CHEBI:43474"/>
    </ligand>
</feature>
<feature type="binding site" evidence="1">
    <location>
        <position position="189"/>
    </location>
    <ligand>
        <name>a purine D-ribonucleoside</name>
        <dbReference type="ChEBI" id="CHEBI:142355"/>
    </ligand>
</feature>
<feature type="binding site" evidence="1">
    <location>
        <position position="208"/>
    </location>
    <ligand>
        <name>phosphate</name>
        <dbReference type="ChEBI" id="CHEBI:43474"/>
    </ligand>
</feature>
<feature type="binding site" evidence="1">
    <location>
        <position position="231"/>
    </location>
    <ligand>
        <name>a purine D-ribonucleoside</name>
        <dbReference type="ChEBI" id="CHEBI:142355"/>
    </ligand>
</feature>
<organism>
    <name type="scientific">Mycobacterium leprae (strain TN)</name>
    <dbReference type="NCBI Taxonomy" id="272631"/>
    <lineage>
        <taxon>Bacteria</taxon>
        <taxon>Bacillati</taxon>
        <taxon>Actinomycetota</taxon>
        <taxon>Actinomycetes</taxon>
        <taxon>Mycobacteriales</taxon>
        <taxon>Mycobacteriaceae</taxon>
        <taxon>Mycobacterium</taxon>
    </lineage>
</organism>
<keyword id="KW-0328">Glycosyltransferase</keyword>
<keyword id="KW-1185">Reference proteome</keyword>
<keyword id="KW-0808">Transferase</keyword>
<reference key="1">
    <citation type="submission" date="1994-03" db="EMBL/GenBank/DDBJ databases">
        <authorList>
            <person name="Smith D.R."/>
            <person name="Robison K."/>
        </authorList>
    </citation>
    <scope>NUCLEOTIDE SEQUENCE [GENOMIC DNA]</scope>
</reference>
<reference key="2">
    <citation type="journal article" date="2001" name="Nature">
        <title>Massive gene decay in the leprosy bacillus.</title>
        <authorList>
            <person name="Cole S.T."/>
            <person name="Eiglmeier K."/>
            <person name="Parkhill J."/>
            <person name="James K.D."/>
            <person name="Thomson N.R."/>
            <person name="Wheeler P.R."/>
            <person name="Honore N."/>
            <person name="Garnier T."/>
            <person name="Churcher C.M."/>
            <person name="Harris D.E."/>
            <person name="Mungall K.L."/>
            <person name="Basham D."/>
            <person name="Brown D."/>
            <person name="Chillingworth T."/>
            <person name="Connor R."/>
            <person name="Davies R.M."/>
            <person name="Devlin K."/>
            <person name="Duthoy S."/>
            <person name="Feltwell T."/>
            <person name="Fraser A."/>
            <person name="Hamlin N."/>
            <person name="Holroyd S."/>
            <person name="Hornsby T."/>
            <person name="Jagels K."/>
            <person name="Lacroix C."/>
            <person name="Maclean J."/>
            <person name="Moule S."/>
            <person name="Murphy L.D."/>
            <person name="Oliver K."/>
            <person name="Quail M.A."/>
            <person name="Rajandream M.A."/>
            <person name="Rutherford K.M."/>
            <person name="Rutter S."/>
            <person name="Seeger K."/>
            <person name="Simon S."/>
            <person name="Simmonds M."/>
            <person name="Skelton J."/>
            <person name="Squares R."/>
            <person name="Squares S."/>
            <person name="Stevens K."/>
            <person name="Taylor K."/>
            <person name="Whitehead S."/>
            <person name="Woodward J.R."/>
            <person name="Barrell B.G."/>
        </authorList>
    </citation>
    <scope>NUCLEOTIDE SEQUENCE [LARGE SCALE GENOMIC DNA]</scope>
    <source>
        <strain>TN</strain>
    </source>
</reference>
<name>PUNA_MYCLE</name>
<accession>P46862</accession>
<protein>
    <recommendedName>
        <fullName>Purine nucleoside phosphorylase</fullName>
        <shortName>PNP</shortName>
        <shortName>Pu-NPase</shortName>
        <ecNumber>2.4.2.1</ecNumber>
    </recommendedName>
    <alternativeName>
        <fullName>Inosine phosphorylase</fullName>
    </alternativeName>
    <alternativeName>
        <fullName>Inosine-guanosine phosphorylase</fullName>
    </alternativeName>
</protein>
<comment type="function">
    <text evidence="2">The purine nucleoside phosphorylases catalyze the phosphorolytic breakdown of the N-glycosidic bond in the beta-(deoxy)ribonucleoside molecules, with the formation of the corresponding free purine bases and pentose-1-phosphate. Cleaves guanosine, inosine, 2'-deoxyguanosine and 2'-deoxyinosine.</text>
</comment>
<comment type="catalytic activity">
    <reaction evidence="2">
        <text>a purine 2'-deoxy-D-ribonucleoside + phosphate = a purine nucleobase + 2-deoxy-alpha-D-ribose 1-phosphate</text>
        <dbReference type="Rhea" id="RHEA:36431"/>
        <dbReference type="ChEBI" id="CHEBI:26386"/>
        <dbReference type="ChEBI" id="CHEBI:43474"/>
        <dbReference type="ChEBI" id="CHEBI:57259"/>
        <dbReference type="ChEBI" id="CHEBI:142361"/>
        <dbReference type="EC" id="2.4.2.1"/>
    </reaction>
</comment>
<comment type="pathway">
    <text>Purine metabolism; purine nucleoside salvage.</text>
</comment>
<comment type="subunit">
    <text evidence="2">Homotrimer.</text>
</comment>
<comment type="similarity">
    <text evidence="4">Belongs to the PNP/MTAP phosphorylase family.</text>
</comment>
<dbReference type="EC" id="2.4.2.1"/>
<dbReference type="EMBL" id="U00022">
    <property type="protein sequence ID" value="AAA17341.1"/>
    <property type="molecule type" value="Genomic_DNA"/>
</dbReference>
<dbReference type="EMBL" id="AL583919">
    <property type="protein sequence ID" value="CAC30216.1"/>
    <property type="molecule type" value="Genomic_DNA"/>
</dbReference>
<dbReference type="PIR" id="S73042">
    <property type="entry name" value="S73042"/>
</dbReference>
<dbReference type="RefSeq" id="NP_301562.1">
    <property type="nucleotide sequence ID" value="NC_002677.1"/>
</dbReference>
<dbReference type="RefSeq" id="WP_010907886.1">
    <property type="nucleotide sequence ID" value="NC_002677.1"/>
</dbReference>
<dbReference type="SMR" id="P46862"/>
<dbReference type="STRING" id="272631.gene:17574531"/>
<dbReference type="KEGG" id="mle:ML0707"/>
<dbReference type="PATRIC" id="fig|272631.5.peg.1272"/>
<dbReference type="Leproma" id="ML0707"/>
<dbReference type="eggNOG" id="COG0005">
    <property type="taxonomic scope" value="Bacteria"/>
</dbReference>
<dbReference type="HOGENOM" id="CLU_054456_1_1_11"/>
<dbReference type="OrthoDB" id="1523230at2"/>
<dbReference type="UniPathway" id="UPA00606"/>
<dbReference type="Proteomes" id="UP000000806">
    <property type="component" value="Chromosome"/>
</dbReference>
<dbReference type="GO" id="GO:0005737">
    <property type="term" value="C:cytoplasm"/>
    <property type="evidence" value="ECO:0007669"/>
    <property type="project" value="TreeGrafter"/>
</dbReference>
<dbReference type="GO" id="GO:0004731">
    <property type="term" value="F:purine-nucleoside phosphorylase activity"/>
    <property type="evidence" value="ECO:0007669"/>
    <property type="project" value="UniProtKB-EC"/>
</dbReference>
<dbReference type="GO" id="GO:0009116">
    <property type="term" value="P:nucleoside metabolic process"/>
    <property type="evidence" value="ECO:0007669"/>
    <property type="project" value="InterPro"/>
</dbReference>
<dbReference type="CDD" id="cd09009">
    <property type="entry name" value="PNP-EcPNPII_like"/>
    <property type="match status" value="1"/>
</dbReference>
<dbReference type="Gene3D" id="3.40.50.1580">
    <property type="entry name" value="Nucleoside phosphorylase domain"/>
    <property type="match status" value="1"/>
</dbReference>
<dbReference type="InterPro" id="IPR000845">
    <property type="entry name" value="Nucleoside_phosphorylase_d"/>
</dbReference>
<dbReference type="InterPro" id="IPR035994">
    <property type="entry name" value="Nucleoside_phosphorylase_sf"/>
</dbReference>
<dbReference type="InterPro" id="IPR011269">
    <property type="entry name" value="PUNP"/>
</dbReference>
<dbReference type="InterPro" id="IPR011268">
    <property type="entry name" value="Purine_phosphorylase"/>
</dbReference>
<dbReference type="InterPro" id="IPR018099">
    <property type="entry name" value="Purine_phosphorylase-2_CS"/>
</dbReference>
<dbReference type="NCBIfam" id="TIGR01697">
    <property type="entry name" value="PNPH-PUNA-XAPA"/>
    <property type="match status" value="1"/>
</dbReference>
<dbReference type="NCBIfam" id="NF006054">
    <property type="entry name" value="PRK08202.1"/>
    <property type="match status" value="1"/>
</dbReference>
<dbReference type="NCBIfam" id="TIGR01698">
    <property type="entry name" value="PUNP"/>
    <property type="match status" value="1"/>
</dbReference>
<dbReference type="PANTHER" id="PTHR11904">
    <property type="entry name" value="METHYLTHIOADENOSINE/PURINE NUCLEOSIDE PHOSPHORYLASE"/>
    <property type="match status" value="1"/>
</dbReference>
<dbReference type="PANTHER" id="PTHR11904:SF9">
    <property type="entry name" value="PURINE NUCLEOSIDE PHOSPHORYLASE-RELATED"/>
    <property type="match status" value="1"/>
</dbReference>
<dbReference type="Pfam" id="PF01048">
    <property type="entry name" value="PNP_UDP_1"/>
    <property type="match status" value="1"/>
</dbReference>
<dbReference type="PIRSF" id="PIRSF000477">
    <property type="entry name" value="PurNPase"/>
    <property type="match status" value="1"/>
</dbReference>
<dbReference type="SUPFAM" id="SSF53167">
    <property type="entry name" value="Purine and uridine phosphorylases"/>
    <property type="match status" value="1"/>
</dbReference>
<dbReference type="PROSITE" id="PS01240">
    <property type="entry name" value="PNP_MTAP_2"/>
    <property type="match status" value="1"/>
</dbReference>
<proteinExistence type="inferred from homology"/>
<sequence>MTYTLLDPDELARRAAQVIGERTGILKHDVAVVLGSGWSSAVAALGSSRAVFPQAELPGFITPNAAGHTGELLSVRIGAHRVLVLAGRIHPYEGHDLRHVVHPVRTACAAGARIIVLTNAAGGLRADMAVGQLVLISDHLNLTTRSPLVGTHFVDLTNAYTTRLRKLASDTDPTLTEGVYAAQPGPHYETPAEIRMLRMLGADLVGMSTVHETIAARAAGAEVLGVSLVTNLAAGITGKPLNHAEVLAAGTASANRIGSLLADIIARF</sequence>
<evidence type="ECO:0000250" key="1">
    <source>
        <dbReference type="UniProtKB" id="P45563"/>
    </source>
</evidence>
<evidence type="ECO:0000250" key="2">
    <source>
        <dbReference type="UniProtKB" id="P77834"/>
    </source>
</evidence>
<evidence type="ECO:0000250" key="3">
    <source>
        <dbReference type="UniProtKB" id="P9WP01"/>
    </source>
</evidence>
<evidence type="ECO:0000305" key="4"/>